<name>CYB6_BIGNA</name>
<dbReference type="EMBL" id="DQ851108">
    <property type="protein sequence ID" value="ABG91409.1"/>
    <property type="molecule type" value="Genomic_DNA"/>
</dbReference>
<dbReference type="EMBL" id="DQ851108">
    <property type="protein sequence ID" value="ABG91416.1"/>
    <property type="molecule type" value="Genomic_DNA"/>
</dbReference>
<dbReference type="SMR" id="Q06J43"/>
<dbReference type="GO" id="GO:0009535">
    <property type="term" value="C:chloroplast thylakoid membrane"/>
    <property type="evidence" value="ECO:0007669"/>
    <property type="project" value="UniProtKB-SubCell"/>
</dbReference>
<dbReference type="GO" id="GO:0045158">
    <property type="term" value="F:electron transporter, transferring electrons within cytochrome b6/f complex of photosystem II activity"/>
    <property type="evidence" value="ECO:0007669"/>
    <property type="project" value="UniProtKB-UniRule"/>
</dbReference>
<dbReference type="GO" id="GO:0046872">
    <property type="term" value="F:metal ion binding"/>
    <property type="evidence" value="ECO:0007669"/>
    <property type="project" value="UniProtKB-KW"/>
</dbReference>
<dbReference type="GO" id="GO:0016491">
    <property type="term" value="F:oxidoreductase activity"/>
    <property type="evidence" value="ECO:0007669"/>
    <property type="project" value="InterPro"/>
</dbReference>
<dbReference type="GO" id="GO:0015979">
    <property type="term" value="P:photosynthesis"/>
    <property type="evidence" value="ECO:0007669"/>
    <property type="project" value="UniProtKB-UniRule"/>
</dbReference>
<dbReference type="GO" id="GO:0022904">
    <property type="term" value="P:respiratory electron transport chain"/>
    <property type="evidence" value="ECO:0007669"/>
    <property type="project" value="InterPro"/>
</dbReference>
<dbReference type="CDD" id="cd00284">
    <property type="entry name" value="Cytochrome_b_N"/>
    <property type="match status" value="1"/>
</dbReference>
<dbReference type="Gene3D" id="1.20.810.10">
    <property type="entry name" value="Cytochrome Bc1 Complex, Chain C"/>
    <property type="match status" value="1"/>
</dbReference>
<dbReference type="HAMAP" id="MF_00633">
    <property type="entry name" value="Cytb6_f_cytb6"/>
    <property type="match status" value="1"/>
</dbReference>
<dbReference type="InterPro" id="IPR005797">
    <property type="entry name" value="Cyt_b/b6_N"/>
</dbReference>
<dbReference type="InterPro" id="IPR023530">
    <property type="entry name" value="Cyt_B6_PetB"/>
</dbReference>
<dbReference type="InterPro" id="IPR027387">
    <property type="entry name" value="Cytb/b6-like_sf"/>
</dbReference>
<dbReference type="InterPro" id="IPR048259">
    <property type="entry name" value="Cytochrome_b_N_euk/bac"/>
</dbReference>
<dbReference type="InterPro" id="IPR016174">
    <property type="entry name" value="Di-haem_cyt_TM"/>
</dbReference>
<dbReference type="NCBIfam" id="NF002990">
    <property type="entry name" value="PRK03735.1"/>
    <property type="match status" value="1"/>
</dbReference>
<dbReference type="PANTHER" id="PTHR19271">
    <property type="entry name" value="CYTOCHROME B"/>
    <property type="match status" value="1"/>
</dbReference>
<dbReference type="PANTHER" id="PTHR19271:SF16">
    <property type="entry name" value="CYTOCHROME B"/>
    <property type="match status" value="1"/>
</dbReference>
<dbReference type="Pfam" id="PF00033">
    <property type="entry name" value="Cytochrome_B"/>
    <property type="match status" value="1"/>
</dbReference>
<dbReference type="PIRSF" id="PIRSF000032">
    <property type="entry name" value="Cytochrome_b6"/>
    <property type="match status" value="1"/>
</dbReference>
<dbReference type="SUPFAM" id="SSF81342">
    <property type="entry name" value="Transmembrane di-heme cytochromes"/>
    <property type="match status" value="1"/>
</dbReference>
<dbReference type="PROSITE" id="PS51002">
    <property type="entry name" value="CYTB_NTER"/>
    <property type="match status" value="1"/>
</dbReference>
<gene>
    <name evidence="1" type="primary">petB-A</name>
</gene>
<gene>
    <name evidence="1" type="primary">petB-B</name>
</gene>
<proteinExistence type="inferred from homology"/>
<protein>
    <recommendedName>
        <fullName evidence="1">Cytochrome b6</fullName>
    </recommendedName>
</protein>
<evidence type="ECO:0000255" key="1">
    <source>
        <dbReference type="HAMAP-Rule" id="MF_00633"/>
    </source>
</evidence>
<accession>Q06J43</accession>
<organism>
    <name type="scientific">Bigelowiella natans</name>
    <name type="common">Pedinomonas minutissima</name>
    <name type="synonym">Chlorarachnion sp. (strain CCMP621)</name>
    <dbReference type="NCBI Taxonomy" id="227086"/>
    <lineage>
        <taxon>Eukaryota</taxon>
        <taxon>Sar</taxon>
        <taxon>Rhizaria</taxon>
        <taxon>Cercozoa</taxon>
        <taxon>Chlorarachniophyceae</taxon>
        <taxon>Bigelowiella</taxon>
    </lineage>
</organism>
<geneLocation type="chloroplast"/>
<sequence length="215" mass="23925">MAVIYNWFNDRLEIQAVADDITAKYVPPHVNLFYCLGGITLTCFLIQVATGFALTFYYRPTVGEALSSVRSIMLDTNFGWLIRSVHRWCASMMVLMMVLHVFRVYLTGGFKNPRESTWVTGVIMASCTVSFGVTGYSLPWDQVGYWAVKIVTGVPEAIPVIGPAIVQLLRGNSSVGQATLTRFYSLHTFVLPLLTAVFMLGHFLMIRKQGISGPL</sequence>
<comment type="function">
    <text evidence="1">Component of the cytochrome b6-f complex, which mediates electron transfer between photosystem II (PSII) and photosystem I (PSI), cyclic electron flow around PSI, and state transitions.</text>
</comment>
<comment type="cofactor">
    <cofactor evidence="1">
        <name>heme b</name>
        <dbReference type="ChEBI" id="CHEBI:60344"/>
    </cofactor>
    <text evidence="1">Binds 2 heme b groups non-covalently with two histidine residues as axial ligands.</text>
</comment>
<comment type="cofactor">
    <cofactor evidence="1">
        <name>heme c</name>
        <dbReference type="ChEBI" id="CHEBI:61717"/>
    </cofactor>
    <text evidence="1">Binds one heme group covalently by a single cysteine link with no axial amino acid ligand. This heme was named heme ci.</text>
</comment>
<comment type="subunit">
    <text evidence="1">The 4 large subunits of the cytochrome b6-f complex are cytochrome b6, subunit IV (17 kDa polypeptide, PetD), cytochrome f and the Rieske protein, while the 4 small subunits are PetG, PetL, PetM and PetN. The complex functions as a dimer.</text>
</comment>
<comment type="subcellular location">
    <subcellularLocation>
        <location evidence="1">Plastid</location>
        <location evidence="1">Chloroplast thylakoid membrane</location>
        <topology evidence="1">Multi-pass membrane protein</topology>
    </subcellularLocation>
</comment>
<comment type="miscellaneous">
    <text evidence="1">Heme 1 (or BH or b566) is high-potential and absorbs at about 566 nm, and heme 2 (or BL or b562) is low-potential and absorbs at about 562 nm.</text>
</comment>
<comment type="similarity">
    <text evidence="1">Belongs to the cytochrome b family. PetB subfamily.</text>
</comment>
<feature type="chain" id="PRO_0000296339" description="Cytochrome b6">
    <location>
        <begin position="1"/>
        <end position="215"/>
    </location>
</feature>
<feature type="transmembrane region" description="Helical" evidence="1">
    <location>
        <begin position="32"/>
        <end position="52"/>
    </location>
</feature>
<feature type="transmembrane region" description="Helical" evidence="1">
    <location>
        <begin position="90"/>
        <end position="110"/>
    </location>
</feature>
<feature type="transmembrane region" description="Helical" evidence="1">
    <location>
        <begin position="116"/>
        <end position="136"/>
    </location>
</feature>
<feature type="transmembrane region" description="Helical" evidence="1">
    <location>
        <begin position="186"/>
        <end position="206"/>
    </location>
</feature>
<feature type="binding site" description="covalent" evidence="1">
    <location>
        <position position="35"/>
    </location>
    <ligand>
        <name>heme c</name>
        <dbReference type="ChEBI" id="CHEBI:61717"/>
    </ligand>
</feature>
<feature type="binding site" description="axial binding residue" evidence="1">
    <location>
        <position position="86"/>
    </location>
    <ligand>
        <name>heme b</name>
        <dbReference type="ChEBI" id="CHEBI:60344"/>
        <label>2</label>
    </ligand>
    <ligandPart>
        <name>Fe</name>
        <dbReference type="ChEBI" id="CHEBI:18248"/>
    </ligandPart>
</feature>
<feature type="binding site" description="axial binding residue" evidence="1">
    <location>
        <position position="100"/>
    </location>
    <ligand>
        <name>heme b</name>
        <dbReference type="ChEBI" id="CHEBI:60344"/>
        <label>1</label>
    </ligand>
    <ligandPart>
        <name>Fe</name>
        <dbReference type="ChEBI" id="CHEBI:18248"/>
    </ligandPart>
</feature>
<feature type="binding site" description="axial binding residue" evidence="1">
    <location>
        <position position="187"/>
    </location>
    <ligand>
        <name>heme b</name>
        <dbReference type="ChEBI" id="CHEBI:60344"/>
        <label>2</label>
    </ligand>
    <ligandPart>
        <name>Fe</name>
        <dbReference type="ChEBI" id="CHEBI:18248"/>
    </ligandPart>
</feature>
<feature type="binding site" description="axial binding residue" evidence="1">
    <location>
        <position position="202"/>
    </location>
    <ligand>
        <name>heme b</name>
        <dbReference type="ChEBI" id="CHEBI:60344"/>
        <label>1</label>
    </ligand>
    <ligandPart>
        <name>Fe</name>
        <dbReference type="ChEBI" id="CHEBI:18248"/>
    </ligandPart>
</feature>
<keyword id="KW-0150">Chloroplast</keyword>
<keyword id="KW-0249">Electron transport</keyword>
<keyword id="KW-0349">Heme</keyword>
<keyword id="KW-0408">Iron</keyword>
<keyword id="KW-0472">Membrane</keyword>
<keyword id="KW-0479">Metal-binding</keyword>
<keyword id="KW-0602">Photosynthesis</keyword>
<keyword id="KW-0934">Plastid</keyword>
<keyword id="KW-0793">Thylakoid</keyword>
<keyword id="KW-0812">Transmembrane</keyword>
<keyword id="KW-1133">Transmembrane helix</keyword>
<keyword id="KW-0813">Transport</keyword>
<reference key="1">
    <citation type="journal article" date="2007" name="Mol. Biol. Evol.">
        <title>The complete chloroplast genome of the chlorarachniophyte Bigelowiella natans: evidence for independent origins of chlorarachniophyte and euglenid secondary endosymbionts.</title>
        <authorList>
            <person name="Rogers M.B."/>
            <person name="Gilson P.R."/>
            <person name="Su V."/>
            <person name="McFadden G.I."/>
            <person name="Keeling P.J."/>
        </authorList>
    </citation>
    <scope>NUCLEOTIDE SEQUENCE [LARGE SCALE GENOMIC DNA]</scope>
</reference>